<gene>
    <name evidence="1" type="primary">aat</name>
    <name type="ordered locus">PP_4005</name>
</gene>
<dbReference type="EC" id="2.3.2.6" evidence="1"/>
<dbReference type="EMBL" id="AE015451">
    <property type="protein sequence ID" value="AAN69599.1"/>
    <property type="molecule type" value="Genomic_DNA"/>
</dbReference>
<dbReference type="RefSeq" id="NP_746135.1">
    <property type="nucleotide sequence ID" value="NC_002947.4"/>
</dbReference>
<dbReference type="RefSeq" id="WP_003251213.1">
    <property type="nucleotide sequence ID" value="NZ_CP169744.1"/>
</dbReference>
<dbReference type="SMR" id="Q88FS7"/>
<dbReference type="STRING" id="160488.PP_4005"/>
<dbReference type="PaxDb" id="160488-PP_4005"/>
<dbReference type="GeneID" id="83679292"/>
<dbReference type="KEGG" id="ppu:PP_4005"/>
<dbReference type="PATRIC" id="fig|160488.4.peg.4261"/>
<dbReference type="eggNOG" id="COG2360">
    <property type="taxonomic scope" value="Bacteria"/>
</dbReference>
<dbReference type="HOGENOM" id="CLU_075045_0_0_6"/>
<dbReference type="OrthoDB" id="9790282at2"/>
<dbReference type="PhylomeDB" id="Q88FS7"/>
<dbReference type="BioCyc" id="PPUT160488:G1G01-4272-MONOMER"/>
<dbReference type="Proteomes" id="UP000000556">
    <property type="component" value="Chromosome"/>
</dbReference>
<dbReference type="GO" id="GO:0005737">
    <property type="term" value="C:cytoplasm"/>
    <property type="evidence" value="ECO:0007669"/>
    <property type="project" value="UniProtKB-SubCell"/>
</dbReference>
<dbReference type="GO" id="GO:0008914">
    <property type="term" value="F:leucyl-tRNA--protein transferase activity"/>
    <property type="evidence" value="ECO:0007669"/>
    <property type="project" value="UniProtKB-UniRule"/>
</dbReference>
<dbReference type="GO" id="GO:0030163">
    <property type="term" value="P:protein catabolic process"/>
    <property type="evidence" value="ECO:0007669"/>
    <property type="project" value="UniProtKB-UniRule"/>
</dbReference>
<dbReference type="FunFam" id="3.30.70.3550:FF:000001">
    <property type="entry name" value="Leucyl/phenylalanyl-tRNA--protein transferase"/>
    <property type="match status" value="1"/>
</dbReference>
<dbReference type="FunFam" id="3.40.630.70:FF:000001">
    <property type="entry name" value="Leucyl/phenylalanyl-tRNA--protein transferase"/>
    <property type="match status" value="1"/>
</dbReference>
<dbReference type="Gene3D" id="3.40.630.70">
    <property type="entry name" value="Leucyl/phenylalanyl-tRNA-protein transferase, C-terminal domain"/>
    <property type="match status" value="1"/>
</dbReference>
<dbReference type="Gene3D" id="3.30.70.3550">
    <property type="entry name" value="Leucyl/phenylalanyl-tRNA-protein transferase, N-terminal domain"/>
    <property type="match status" value="1"/>
</dbReference>
<dbReference type="HAMAP" id="MF_00688">
    <property type="entry name" value="Leu_Phe_trans"/>
    <property type="match status" value="1"/>
</dbReference>
<dbReference type="InterPro" id="IPR016181">
    <property type="entry name" value="Acyl_CoA_acyltransferase"/>
</dbReference>
<dbReference type="InterPro" id="IPR004616">
    <property type="entry name" value="Leu/Phe-tRNA_Trfase"/>
</dbReference>
<dbReference type="InterPro" id="IPR042203">
    <property type="entry name" value="Leu/Phe-tRNA_Trfase_C"/>
</dbReference>
<dbReference type="InterPro" id="IPR042221">
    <property type="entry name" value="Leu/Phe-tRNA_Trfase_N"/>
</dbReference>
<dbReference type="NCBIfam" id="TIGR00667">
    <property type="entry name" value="aat"/>
    <property type="match status" value="1"/>
</dbReference>
<dbReference type="PANTHER" id="PTHR30098">
    <property type="entry name" value="LEUCYL/PHENYLALANYL-TRNA--PROTEIN TRANSFERASE"/>
    <property type="match status" value="1"/>
</dbReference>
<dbReference type="PANTHER" id="PTHR30098:SF2">
    <property type="entry name" value="LEUCYL_PHENYLALANYL-TRNA--PROTEIN TRANSFERASE"/>
    <property type="match status" value="1"/>
</dbReference>
<dbReference type="Pfam" id="PF03588">
    <property type="entry name" value="Leu_Phe_trans"/>
    <property type="match status" value="1"/>
</dbReference>
<dbReference type="SUPFAM" id="SSF55729">
    <property type="entry name" value="Acyl-CoA N-acyltransferases (Nat)"/>
    <property type="match status" value="1"/>
</dbReference>
<proteinExistence type="inferred from homology"/>
<accession>Q88FS7</accession>
<name>LFTR_PSEPK</name>
<protein>
    <recommendedName>
        <fullName evidence="1">Leucyl/phenylalanyl-tRNA--protein transferase</fullName>
        <ecNumber evidence="1">2.3.2.6</ecNumber>
    </recommendedName>
    <alternativeName>
        <fullName evidence="1">L/F-transferase</fullName>
    </alternativeName>
    <alternativeName>
        <fullName evidence="1">Leucyltransferase</fullName>
    </alternativeName>
    <alternativeName>
        <fullName evidence="1">Phenyalanyltransferase</fullName>
    </alternativeName>
</protein>
<keyword id="KW-0012">Acyltransferase</keyword>
<keyword id="KW-0963">Cytoplasm</keyword>
<keyword id="KW-1185">Reference proteome</keyword>
<keyword id="KW-0808">Transferase</keyword>
<reference key="1">
    <citation type="journal article" date="2002" name="Environ. Microbiol.">
        <title>Complete genome sequence and comparative analysis of the metabolically versatile Pseudomonas putida KT2440.</title>
        <authorList>
            <person name="Nelson K.E."/>
            <person name="Weinel C."/>
            <person name="Paulsen I.T."/>
            <person name="Dodson R.J."/>
            <person name="Hilbert H."/>
            <person name="Martins dos Santos V.A.P."/>
            <person name="Fouts D.E."/>
            <person name="Gill S.R."/>
            <person name="Pop M."/>
            <person name="Holmes M."/>
            <person name="Brinkac L.M."/>
            <person name="Beanan M.J."/>
            <person name="DeBoy R.T."/>
            <person name="Daugherty S.C."/>
            <person name="Kolonay J.F."/>
            <person name="Madupu R."/>
            <person name="Nelson W.C."/>
            <person name="White O."/>
            <person name="Peterson J.D."/>
            <person name="Khouri H.M."/>
            <person name="Hance I."/>
            <person name="Chris Lee P."/>
            <person name="Holtzapple E.K."/>
            <person name="Scanlan D."/>
            <person name="Tran K."/>
            <person name="Moazzez A."/>
            <person name="Utterback T.R."/>
            <person name="Rizzo M."/>
            <person name="Lee K."/>
            <person name="Kosack D."/>
            <person name="Moestl D."/>
            <person name="Wedler H."/>
            <person name="Lauber J."/>
            <person name="Stjepandic D."/>
            <person name="Hoheisel J."/>
            <person name="Straetz M."/>
            <person name="Heim S."/>
            <person name="Kiewitz C."/>
            <person name="Eisen J.A."/>
            <person name="Timmis K.N."/>
            <person name="Duesterhoeft A."/>
            <person name="Tuemmler B."/>
            <person name="Fraser C.M."/>
        </authorList>
    </citation>
    <scope>NUCLEOTIDE SEQUENCE [LARGE SCALE GENOMIC DNA]</scope>
    <source>
        <strain>ATCC 47054 / DSM 6125 / CFBP 8728 / NCIMB 11950 / KT2440</strain>
    </source>
</reference>
<sequence>MLTWLTRDSLTFPPLEKALHDPNGLLAAGGDLSPERLVQAYRHGCFPWYQDGQPILWWSPDPRTVLLPDQLHVSRSLAKLMRQGRYQVSFDTDFPAVIAACAAPRDYADGTWITDTMRNAYCELHRRGIAHSVEVRQDGELVGGLYGLAMGQLFFGESMFSRADNASKVGFVTLVNHLRDAGFVLIDCQMPTNHLHSLGAHAISRAEFASYLARHLDQPNSASWVA</sequence>
<evidence type="ECO:0000255" key="1">
    <source>
        <dbReference type="HAMAP-Rule" id="MF_00688"/>
    </source>
</evidence>
<comment type="function">
    <text evidence="1">Functions in the N-end rule pathway of protein degradation where it conjugates Leu, Phe and, less efficiently, Met from aminoacyl-tRNAs to the N-termini of proteins containing an N-terminal arginine or lysine.</text>
</comment>
<comment type="catalytic activity">
    <reaction evidence="1">
        <text>N-terminal L-lysyl-[protein] + L-leucyl-tRNA(Leu) = N-terminal L-leucyl-L-lysyl-[protein] + tRNA(Leu) + H(+)</text>
        <dbReference type="Rhea" id="RHEA:12340"/>
        <dbReference type="Rhea" id="RHEA-COMP:9613"/>
        <dbReference type="Rhea" id="RHEA-COMP:9622"/>
        <dbReference type="Rhea" id="RHEA-COMP:12670"/>
        <dbReference type="Rhea" id="RHEA-COMP:12671"/>
        <dbReference type="ChEBI" id="CHEBI:15378"/>
        <dbReference type="ChEBI" id="CHEBI:65249"/>
        <dbReference type="ChEBI" id="CHEBI:78442"/>
        <dbReference type="ChEBI" id="CHEBI:78494"/>
        <dbReference type="ChEBI" id="CHEBI:133043"/>
        <dbReference type="EC" id="2.3.2.6"/>
    </reaction>
</comment>
<comment type="catalytic activity">
    <reaction evidence="1">
        <text>N-terminal L-arginyl-[protein] + L-leucyl-tRNA(Leu) = N-terminal L-leucyl-L-arginyl-[protein] + tRNA(Leu) + H(+)</text>
        <dbReference type="Rhea" id="RHEA:50416"/>
        <dbReference type="Rhea" id="RHEA-COMP:9613"/>
        <dbReference type="Rhea" id="RHEA-COMP:9622"/>
        <dbReference type="Rhea" id="RHEA-COMP:12672"/>
        <dbReference type="Rhea" id="RHEA-COMP:12673"/>
        <dbReference type="ChEBI" id="CHEBI:15378"/>
        <dbReference type="ChEBI" id="CHEBI:64719"/>
        <dbReference type="ChEBI" id="CHEBI:78442"/>
        <dbReference type="ChEBI" id="CHEBI:78494"/>
        <dbReference type="ChEBI" id="CHEBI:133044"/>
        <dbReference type="EC" id="2.3.2.6"/>
    </reaction>
</comment>
<comment type="catalytic activity">
    <reaction evidence="1">
        <text>L-phenylalanyl-tRNA(Phe) + an N-terminal L-alpha-aminoacyl-[protein] = an N-terminal L-phenylalanyl-L-alpha-aminoacyl-[protein] + tRNA(Phe)</text>
        <dbReference type="Rhea" id="RHEA:43632"/>
        <dbReference type="Rhea" id="RHEA-COMP:9668"/>
        <dbReference type="Rhea" id="RHEA-COMP:9699"/>
        <dbReference type="Rhea" id="RHEA-COMP:10636"/>
        <dbReference type="Rhea" id="RHEA-COMP:10637"/>
        <dbReference type="ChEBI" id="CHEBI:78442"/>
        <dbReference type="ChEBI" id="CHEBI:78531"/>
        <dbReference type="ChEBI" id="CHEBI:78597"/>
        <dbReference type="ChEBI" id="CHEBI:83561"/>
        <dbReference type="EC" id="2.3.2.6"/>
    </reaction>
</comment>
<comment type="subcellular location">
    <subcellularLocation>
        <location evidence="1">Cytoplasm</location>
    </subcellularLocation>
</comment>
<comment type="similarity">
    <text evidence="1">Belongs to the L/F-transferase family.</text>
</comment>
<organism>
    <name type="scientific">Pseudomonas putida (strain ATCC 47054 / DSM 6125 / CFBP 8728 / NCIMB 11950 / KT2440)</name>
    <dbReference type="NCBI Taxonomy" id="160488"/>
    <lineage>
        <taxon>Bacteria</taxon>
        <taxon>Pseudomonadati</taxon>
        <taxon>Pseudomonadota</taxon>
        <taxon>Gammaproteobacteria</taxon>
        <taxon>Pseudomonadales</taxon>
        <taxon>Pseudomonadaceae</taxon>
        <taxon>Pseudomonas</taxon>
    </lineage>
</organism>
<feature type="chain" id="PRO_0000207235" description="Leucyl/phenylalanyl-tRNA--protein transferase">
    <location>
        <begin position="1"/>
        <end position="226"/>
    </location>
</feature>